<name>GRPE_AFIC5</name>
<protein>
    <recommendedName>
        <fullName evidence="1">Protein GrpE</fullName>
    </recommendedName>
    <alternativeName>
        <fullName evidence="1">HSP-70 cofactor</fullName>
    </alternativeName>
</protein>
<evidence type="ECO:0000255" key="1">
    <source>
        <dbReference type="HAMAP-Rule" id="MF_01151"/>
    </source>
</evidence>
<evidence type="ECO:0000256" key="2">
    <source>
        <dbReference type="SAM" id="MobiDB-lite"/>
    </source>
</evidence>
<feature type="chain" id="PRO_1000137591" description="Protein GrpE">
    <location>
        <begin position="1"/>
        <end position="200"/>
    </location>
</feature>
<feature type="region of interest" description="Disordered" evidence="2">
    <location>
        <begin position="1"/>
        <end position="43"/>
    </location>
</feature>
<feature type="compositionally biased region" description="Basic and acidic residues" evidence="2">
    <location>
        <begin position="1"/>
        <end position="11"/>
    </location>
</feature>
<dbReference type="EMBL" id="CP001196">
    <property type="protein sequence ID" value="ACI91561.1"/>
    <property type="molecule type" value="Genomic_DNA"/>
</dbReference>
<dbReference type="EMBL" id="CP002826">
    <property type="protein sequence ID" value="AEI04848.1"/>
    <property type="molecule type" value="Genomic_DNA"/>
</dbReference>
<dbReference type="RefSeq" id="WP_012561592.1">
    <property type="nucleotide sequence ID" value="NC_015684.1"/>
</dbReference>
<dbReference type="SMR" id="B6JCI1"/>
<dbReference type="STRING" id="504832.OCA5_c01160"/>
<dbReference type="KEGG" id="oca:OCAR_4415"/>
<dbReference type="KEGG" id="ocg:OCA5_c01160"/>
<dbReference type="PATRIC" id="fig|504832.7.peg.123"/>
<dbReference type="eggNOG" id="COG0576">
    <property type="taxonomic scope" value="Bacteria"/>
</dbReference>
<dbReference type="HOGENOM" id="CLU_057217_6_2_5"/>
<dbReference type="OrthoDB" id="9789811at2"/>
<dbReference type="Proteomes" id="UP000007730">
    <property type="component" value="Chromosome"/>
</dbReference>
<dbReference type="GO" id="GO:0005737">
    <property type="term" value="C:cytoplasm"/>
    <property type="evidence" value="ECO:0007669"/>
    <property type="project" value="UniProtKB-SubCell"/>
</dbReference>
<dbReference type="GO" id="GO:0000774">
    <property type="term" value="F:adenyl-nucleotide exchange factor activity"/>
    <property type="evidence" value="ECO:0007669"/>
    <property type="project" value="InterPro"/>
</dbReference>
<dbReference type="GO" id="GO:0042803">
    <property type="term" value="F:protein homodimerization activity"/>
    <property type="evidence" value="ECO:0007669"/>
    <property type="project" value="InterPro"/>
</dbReference>
<dbReference type="GO" id="GO:0051087">
    <property type="term" value="F:protein-folding chaperone binding"/>
    <property type="evidence" value="ECO:0007669"/>
    <property type="project" value="InterPro"/>
</dbReference>
<dbReference type="GO" id="GO:0051082">
    <property type="term" value="F:unfolded protein binding"/>
    <property type="evidence" value="ECO:0007669"/>
    <property type="project" value="TreeGrafter"/>
</dbReference>
<dbReference type="GO" id="GO:0006457">
    <property type="term" value="P:protein folding"/>
    <property type="evidence" value="ECO:0007669"/>
    <property type="project" value="InterPro"/>
</dbReference>
<dbReference type="CDD" id="cd00446">
    <property type="entry name" value="GrpE"/>
    <property type="match status" value="1"/>
</dbReference>
<dbReference type="FunFam" id="2.30.22.10:FF:000002">
    <property type="entry name" value="GrpE protein homolog"/>
    <property type="match status" value="1"/>
</dbReference>
<dbReference type="Gene3D" id="3.90.20.20">
    <property type="match status" value="1"/>
</dbReference>
<dbReference type="Gene3D" id="2.30.22.10">
    <property type="entry name" value="Head domain of nucleotide exchange factor GrpE"/>
    <property type="match status" value="1"/>
</dbReference>
<dbReference type="HAMAP" id="MF_01151">
    <property type="entry name" value="GrpE"/>
    <property type="match status" value="1"/>
</dbReference>
<dbReference type="InterPro" id="IPR000740">
    <property type="entry name" value="GrpE"/>
</dbReference>
<dbReference type="InterPro" id="IPR013805">
    <property type="entry name" value="GrpE_coiled_coil"/>
</dbReference>
<dbReference type="InterPro" id="IPR009012">
    <property type="entry name" value="GrpE_head"/>
</dbReference>
<dbReference type="NCBIfam" id="NF010738">
    <property type="entry name" value="PRK14140.1"/>
    <property type="match status" value="1"/>
</dbReference>
<dbReference type="NCBIfam" id="NF010739">
    <property type="entry name" value="PRK14141.1"/>
    <property type="match status" value="1"/>
</dbReference>
<dbReference type="PANTHER" id="PTHR21237">
    <property type="entry name" value="GRPE PROTEIN"/>
    <property type="match status" value="1"/>
</dbReference>
<dbReference type="PANTHER" id="PTHR21237:SF23">
    <property type="entry name" value="GRPE PROTEIN HOMOLOG, MITOCHONDRIAL"/>
    <property type="match status" value="1"/>
</dbReference>
<dbReference type="Pfam" id="PF01025">
    <property type="entry name" value="GrpE"/>
    <property type="match status" value="1"/>
</dbReference>
<dbReference type="PRINTS" id="PR00773">
    <property type="entry name" value="GRPEPROTEIN"/>
</dbReference>
<dbReference type="SUPFAM" id="SSF58014">
    <property type="entry name" value="Coiled-coil domain of nucleotide exchange factor GrpE"/>
    <property type="match status" value="1"/>
</dbReference>
<dbReference type="SUPFAM" id="SSF51064">
    <property type="entry name" value="Head domain of nucleotide exchange factor GrpE"/>
    <property type="match status" value="1"/>
</dbReference>
<dbReference type="PROSITE" id="PS01071">
    <property type="entry name" value="GRPE"/>
    <property type="match status" value="1"/>
</dbReference>
<keyword id="KW-0143">Chaperone</keyword>
<keyword id="KW-0963">Cytoplasm</keyword>
<keyword id="KW-1185">Reference proteome</keyword>
<keyword id="KW-0346">Stress response</keyword>
<gene>
    <name evidence="1" type="primary">grpE</name>
    <name type="ordered locus">OCAR_4415</name>
    <name type="ordered locus">OCA5_c01160</name>
</gene>
<proteinExistence type="inferred from homology"/>
<accession>B6JCI1</accession>
<accession>F8BRE4</accession>
<sequence>MTDNDGQKDFSEAAAENAGSKPGEPRVSKPYIMPDDPEETPSEALVKEAAEAKDRMLRTLAEMENLRKRTQREVADARAYGIAGFARDVLEIADNLQRALDAVPAEARAAADPGLTALIEGVELTERSLHRALEKNGVKKLDAAGEKFDPNIHQAMFEVPDNSVPPGTVVQVIQTGYMIGDRVLRPALVGVSKAEPKPAA</sequence>
<organism>
    <name type="scientific">Afipia carboxidovorans (strain ATCC 49405 / DSM 1227 / KCTC 32145 / OM5)</name>
    <name type="common">Oligotropha carboxidovorans</name>
    <dbReference type="NCBI Taxonomy" id="504832"/>
    <lineage>
        <taxon>Bacteria</taxon>
        <taxon>Pseudomonadati</taxon>
        <taxon>Pseudomonadota</taxon>
        <taxon>Alphaproteobacteria</taxon>
        <taxon>Hyphomicrobiales</taxon>
        <taxon>Nitrobacteraceae</taxon>
        <taxon>Afipia</taxon>
    </lineage>
</organism>
<reference key="1">
    <citation type="journal article" date="2008" name="J. Bacteriol.">
        <title>Genome sequence of the chemolithoautotrophic bacterium Oligotropha carboxidovorans OM5T.</title>
        <authorList>
            <person name="Paul D."/>
            <person name="Bridges S."/>
            <person name="Burgess S.C."/>
            <person name="Dandass Y."/>
            <person name="Lawrence M.L."/>
        </authorList>
    </citation>
    <scope>NUCLEOTIDE SEQUENCE [LARGE SCALE GENOMIC DNA]</scope>
    <source>
        <strain>ATCC 49405 / DSM 1227 / KCTC 32145 / OM5</strain>
    </source>
</reference>
<reference key="2">
    <citation type="journal article" date="2011" name="J. Bacteriol.">
        <title>Complete genome sequences of the chemolithoautotrophic Oligotropha carboxidovorans strains OM4 and OM5.</title>
        <authorList>
            <person name="Volland S."/>
            <person name="Rachinger M."/>
            <person name="Strittmatter A."/>
            <person name="Daniel R."/>
            <person name="Gottschalk G."/>
            <person name="Meyer O."/>
        </authorList>
    </citation>
    <scope>NUCLEOTIDE SEQUENCE [LARGE SCALE GENOMIC DNA]</scope>
    <source>
        <strain>ATCC 49405 / DSM 1227 / KCTC 32145 / OM5</strain>
    </source>
</reference>
<comment type="function">
    <text evidence="1">Participates actively in the response to hyperosmotic and heat shock by preventing the aggregation of stress-denatured proteins, in association with DnaK and GrpE. It is the nucleotide exchange factor for DnaK and may function as a thermosensor. Unfolded proteins bind initially to DnaJ; upon interaction with the DnaJ-bound protein, DnaK hydrolyzes its bound ATP, resulting in the formation of a stable complex. GrpE releases ADP from DnaK; ATP binding to DnaK triggers the release of the substrate protein, thus completing the reaction cycle. Several rounds of ATP-dependent interactions between DnaJ, DnaK and GrpE are required for fully efficient folding.</text>
</comment>
<comment type="subunit">
    <text evidence="1">Homodimer.</text>
</comment>
<comment type="subcellular location">
    <subcellularLocation>
        <location evidence="1">Cytoplasm</location>
    </subcellularLocation>
</comment>
<comment type="similarity">
    <text evidence="1">Belongs to the GrpE family.</text>
</comment>